<reference key="1">
    <citation type="journal article" date="1999" name="Nature">
        <title>Genomic sequence comparison of two unrelated isolates of the human gastric pathogen Helicobacter pylori.</title>
        <authorList>
            <person name="Alm R.A."/>
            <person name="Ling L.-S.L."/>
            <person name="Moir D.T."/>
            <person name="King B.L."/>
            <person name="Brown E.D."/>
            <person name="Doig P.C."/>
            <person name="Smith D.R."/>
            <person name="Noonan B."/>
            <person name="Guild B.C."/>
            <person name="deJonge B.L."/>
            <person name="Carmel G."/>
            <person name="Tummino P.J."/>
            <person name="Caruso A."/>
            <person name="Uria-Nickelsen M."/>
            <person name="Mills D.M."/>
            <person name="Ives C."/>
            <person name="Gibson R."/>
            <person name="Merberg D."/>
            <person name="Mills S.D."/>
            <person name="Jiang Q."/>
            <person name="Taylor D.E."/>
            <person name="Vovis G.F."/>
            <person name="Trust T.J."/>
        </authorList>
    </citation>
    <scope>NUCLEOTIDE SEQUENCE [LARGE SCALE GENOMIC DNA]</scope>
    <source>
        <strain>J99 / ATCC 700824</strain>
    </source>
</reference>
<name>TRPA_HELPJ</name>
<dbReference type="EC" id="4.2.1.20" evidence="1"/>
<dbReference type="EMBL" id="AE001439">
    <property type="protein sequence ID" value="AAD06777.1"/>
    <property type="molecule type" value="Genomic_DNA"/>
</dbReference>
<dbReference type="PIR" id="B71836">
    <property type="entry name" value="B71836"/>
</dbReference>
<dbReference type="RefSeq" id="WP_001270360.1">
    <property type="nucleotide sequence ID" value="NC_000921.1"/>
</dbReference>
<dbReference type="SMR" id="Q9ZJV0"/>
<dbReference type="KEGG" id="hpj:jhp_1198"/>
<dbReference type="PATRIC" id="fig|85963.30.peg.1374"/>
<dbReference type="eggNOG" id="COG0159">
    <property type="taxonomic scope" value="Bacteria"/>
</dbReference>
<dbReference type="UniPathway" id="UPA00035">
    <property type="reaction ID" value="UER00044"/>
</dbReference>
<dbReference type="Proteomes" id="UP000000804">
    <property type="component" value="Chromosome"/>
</dbReference>
<dbReference type="GO" id="GO:0005829">
    <property type="term" value="C:cytosol"/>
    <property type="evidence" value="ECO:0007669"/>
    <property type="project" value="TreeGrafter"/>
</dbReference>
<dbReference type="GO" id="GO:0004834">
    <property type="term" value="F:tryptophan synthase activity"/>
    <property type="evidence" value="ECO:0007669"/>
    <property type="project" value="UniProtKB-UniRule"/>
</dbReference>
<dbReference type="CDD" id="cd04724">
    <property type="entry name" value="Tryptophan_synthase_alpha"/>
    <property type="match status" value="1"/>
</dbReference>
<dbReference type="FunFam" id="3.20.20.70:FF:000037">
    <property type="entry name" value="Tryptophan synthase alpha chain"/>
    <property type="match status" value="1"/>
</dbReference>
<dbReference type="Gene3D" id="3.20.20.70">
    <property type="entry name" value="Aldolase class I"/>
    <property type="match status" value="1"/>
</dbReference>
<dbReference type="HAMAP" id="MF_00131">
    <property type="entry name" value="Trp_synth_alpha"/>
    <property type="match status" value="1"/>
</dbReference>
<dbReference type="InterPro" id="IPR013785">
    <property type="entry name" value="Aldolase_TIM"/>
</dbReference>
<dbReference type="InterPro" id="IPR011060">
    <property type="entry name" value="RibuloseP-bd_barrel"/>
</dbReference>
<dbReference type="InterPro" id="IPR018204">
    <property type="entry name" value="Trp_synthase_alpha_AS"/>
</dbReference>
<dbReference type="InterPro" id="IPR002028">
    <property type="entry name" value="Trp_synthase_suA"/>
</dbReference>
<dbReference type="NCBIfam" id="TIGR00262">
    <property type="entry name" value="trpA"/>
    <property type="match status" value="1"/>
</dbReference>
<dbReference type="PANTHER" id="PTHR43406:SF1">
    <property type="entry name" value="TRYPTOPHAN SYNTHASE ALPHA CHAIN, CHLOROPLASTIC"/>
    <property type="match status" value="1"/>
</dbReference>
<dbReference type="PANTHER" id="PTHR43406">
    <property type="entry name" value="TRYPTOPHAN SYNTHASE, ALPHA CHAIN"/>
    <property type="match status" value="1"/>
</dbReference>
<dbReference type="Pfam" id="PF00290">
    <property type="entry name" value="Trp_syntA"/>
    <property type="match status" value="1"/>
</dbReference>
<dbReference type="SUPFAM" id="SSF51366">
    <property type="entry name" value="Ribulose-phoshate binding barrel"/>
    <property type="match status" value="1"/>
</dbReference>
<dbReference type="PROSITE" id="PS00167">
    <property type="entry name" value="TRP_SYNTHASE_ALPHA"/>
    <property type="match status" value="1"/>
</dbReference>
<proteinExistence type="inferred from homology"/>
<feature type="chain" id="PRO_0000098790" description="Tryptophan synthase alpha chain">
    <location>
        <begin position="1"/>
        <end position="262"/>
    </location>
</feature>
<feature type="active site" description="Proton acceptor" evidence="1">
    <location>
        <position position="48"/>
    </location>
</feature>
<feature type="active site" description="Proton acceptor" evidence="1">
    <location>
        <position position="59"/>
    </location>
</feature>
<protein>
    <recommendedName>
        <fullName evidence="1">Tryptophan synthase alpha chain</fullName>
        <ecNumber evidence="1">4.2.1.20</ecNumber>
    </recommendedName>
</protein>
<sequence length="262" mass="28426">MRYQNMFETLKKHKKMAFIPFVTLGDPNYELSFEIVKTLIISGVSALELGLAFSDPVADGTTIQASHLRALKHASMAKNFQLLKKIRGYNHDIPIGLLAYANLIFSYGVDGFYAQAKECGVDSVLIADMPLIEKELVIKSAQKHQIKQIFIASPNASSKDLEQVATHSQGYIYTLARSGVTGASHTLENDASAIIKTLKTFSSTPALLGFGISKKEHITNAKGMGADGVICGSALVKIIEENLNNEDAMLEKIKGFVGGMIS</sequence>
<evidence type="ECO:0000255" key="1">
    <source>
        <dbReference type="HAMAP-Rule" id="MF_00131"/>
    </source>
</evidence>
<organism>
    <name type="scientific">Helicobacter pylori (strain J99 / ATCC 700824)</name>
    <name type="common">Campylobacter pylori J99</name>
    <dbReference type="NCBI Taxonomy" id="85963"/>
    <lineage>
        <taxon>Bacteria</taxon>
        <taxon>Pseudomonadati</taxon>
        <taxon>Campylobacterota</taxon>
        <taxon>Epsilonproteobacteria</taxon>
        <taxon>Campylobacterales</taxon>
        <taxon>Helicobacteraceae</taxon>
        <taxon>Helicobacter</taxon>
    </lineage>
</organism>
<accession>Q9ZJV0</accession>
<comment type="function">
    <text evidence="1">The alpha subunit is responsible for the aldol cleavage of indoleglycerol phosphate to indole and glyceraldehyde 3-phosphate.</text>
</comment>
<comment type="catalytic activity">
    <reaction evidence="1">
        <text>(1S,2R)-1-C-(indol-3-yl)glycerol 3-phosphate + L-serine = D-glyceraldehyde 3-phosphate + L-tryptophan + H2O</text>
        <dbReference type="Rhea" id="RHEA:10532"/>
        <dbReference type="ChEBI" id="CHEBI:15377"/>
        <dbReference type="ChEBI" id="CHEBI:33384"/>
        <dbReference type="ChEBI" id="CHEBI:57912"/>
        <dbReference type="ChEBI" id="CHEBI:58866"/>
        <dbReference type="ChEBI" id="CHEBI:59776"/>
        <dbReference type="EC" id="4.2.1.20"/>
    </reaction>
</comment>
<comment type="pathway">
    <text evidence="1">Amino-acid biosynthesis; L-tryptophan biosynthesis; L-tryptophan from chorismate: step 5/5.</text>
</comment>
<comment type="subunit">
    <text evidence="1">Tetramer of two alpha and two beta chains.</text>
</comment>
<comment type="similarity">
    <text evidence="1">Belongs to the TrpA family.</text>
</comment>
<gene>
    <name evidence="1" type="primary">trpA</name>
    <name type="ordered locus">jhp_1198</name>
</gene>
<keyword id="KW-0028">Amino-acid biosynthesis</keyword>
<keyword id="KW-0057">Aromatic amino acid biosynthesis</keyword>
<keyword id="KW-0456">Lyase</keyword>
<keyword id="KW-0822">Tryptophan biosynthesis</keyword>